<protein>
    <recommendedName>
        <fullName evidence="17">NPC1-like intracellular cholesterol transporter 1</fullName>
    </recommendedName>
    <alternativeName>
        <fullName evidence="12 13">Niemann-Pick C1-like protein 1</fullName>
        <shortName evidence="12 13">Npc1l1</shortName>
    </alternativeName>
</protein>
<gene>
    <name evidence="17" type="primary">Npc1l1</name>
</gene>
<proteinExistence type="evidence at protein level"/>
<reference key="1">
    <citation type="journal article" date="2004" name="Science">
        <title>Niemann-Pick C1 like 1 protein is critical for intestinal cholesterol absorption.</title>
        <authorList>
            <person name="Altmann S.W."/>
            <person name="Davis H.R. Jr."/>
            <person name="Zhu L.-J."/>
            <person name="Yao X."/>
            <person name="Hoos L.M."/>
            <person name="Tetzloff G."/>
            <person name="Iyer S.P.N."/>
            <person name="Maguire M."/>
            <person name="Golovko A."/>
            <person name="Zeng M."/>
            <person name="Wang L."/>
            <person name="Murgolo N."/>
            <person name="Graziano M.P."/>
        </authorList>
    </citation>
    <scope>NUCLEOTIDE SEQUENCE [MRNA]</scope>
    <scope>FUNCTION</scope>
    <scope>TISSUE SPECIFICITY</scope>
    <source>
        <strain>C57BL/6J</strain>
    </source>
</reference>
<reference key="2">
    <citation type="journal article" date="2009" name="PLoS Biol.">
        <title>Lineage-specific biology revealed by a finished genome assembly of the mouse.</title>
        <authorList>
            <person name="Church D.M."/>
            <person name="Goodstadt L."/>
            <person name="Hillier L.W."/>
            <person name="Zody M.C."/>
            <person name="Goldstein S."/>
            <person name="She X."/>
            <person name="Bult C.J."/>
            <person name="Agarwala R."/>
            <person name="Cherry J.L."/>
            <person name="DiCuccio M."/>
            <person name="Hlavina W."/>
            <person name="Kapustin Y."/>
            <person name="Meric P."/>
            <person name="Maglott D."/>
            <person name="Birtle Z."/>
            <person name="Marques A.C."/>
            <person name="Graves T."/>
            <person name="Zhou S."/>
            <person name="Teague B."/>
            <person name="Potamousis K."/>
            <person name="Churas C."/>
            <person name="Place M."/>
            <person name="Herschleb J."/>
            <person name="Runnheim R."/>
            <person name="Forrest D."/>
            <person name="Amos-Landgraf J."/>
            <person name="Schwartz D.C."/>
            <person name="Cheng Z."/>
            <person name="Lindblad-Toh K."/>
            <person name="Eichler E.E."/>
            <person name="Ponting C.P."/>
        </authorList>
    </citation>
    <scope>NUCLEOTIDE SEQUENCE [LARGE SCALE GENOMIC DNA]</scope>
    <source>
        <strain>C57BL/6J</strain>
    </source>
</reference>
<reference key="3">
    <citation type="journal article" date="2004" name="J. Biol. Chem.">
        <title>Niemann-Pick C1 Like 1 (NPC1L1) is the intestinal phytosterol and cholesterol transporter and a key modulator of whole-body cholesterol homeostasis.</title>
        <authorList>
            <person name="Davis H.R. Jr."/>
            <person name="Zhu L.-J."/>
            <person name="Hoos L.M."/>
            <person name="Tetzloff G."/>
            <person name="Maguire M."/>
            <person name="Liu J."/>
            <person name="Yao X."/>
            <person name="Iyer S.P.N."/>
            <person name="Lam M.-H."/>
            <person name="Lund E.G."/>
            <person name="Detmers P.A."/>
            <person name="Graziano M.P."/>
            <person name="Altmann S.W."/>
        </authorList>
    </citation>
    <scope>FUNCTION</scope>
    <scope>CATALYTIC ACTIVITY</scope>
    <scope>INDUCTION</scope>
</reference>
<reference key="4">
    <citation type="journal article" date="2005" name="J. Biol. Chem.">
        <title>Inactivation of NPC1L1 causes multiple lipid transport defects and protects against diet-induced hypercholesterolemia.</title>
        <authorList>
            <person name="Davies J.P."/>
            <person name="Scott C."/>
            <person name="Oishi K."/>
            <person name="Liapis A."/>
            <person name="Ioannou Y.A."/>
        </authorList>
    </citation>
    <scope>TISSUE SPECIFICITY</scope>
    <scope>FUNCTION</scope>
    <scope>DISRUPTION PHENOTYPE</scope>
    <scope>CATALYTIC ACTIVITY</scope>
</reference>
<reference key="5">
    <citation type="journal article" date="2005" name="J. Lipid Res.">
        <title>Reduced cholesterol absorption upon PPARdelta activation coincides with decreased intestinal expression of NPC1L1.</title>
        <authorList>
            <person name="van der Veen J.N."/>
            <person name="Kruit J.K."/>
            <person name="Havinga R."/>
            <person name="Baller J.F.W."/>
            <person name="Chimini G."/>
            <person name="Lestavel S."/>
            <person name="Staels B."/>
            <person name="Groot P.H.E."/>
            <person name="Groen A.K."/>
            <person name="Kuipers F."/>
        </authorList>
    </citation>
    <scope>INDUCTION</scope>
</reference>
<reference key="6">
    <citation type="journal article" date="2018" name="Science">
        <title>A LIMA1 variant promotes low plasma LDL cholesterol and decreases intestinal cholesterol absorption.</title>
        <authorList>
            <person name="Zhang Y.Y."/>
            <person name="Fu Z.Y."/>
            <person name="Wei J."/>
            <person name="Qi W."/>
            <person name="Baituola G."/>
            <person name="Luo J."/>
            <person name="Meng Y.J."/>
            <person name="Guo S.Y."/>
            <person name="Yin H."/>
            <person name="Jiang S.Y."/>
            <person name="Li Y.F."/>
            <person name="Miao H.H."/>
            <person name="Liu Y."/>
            <person name="Wang Y."/>
            <person name="Li B.L."/>
            <person name="Ma Y.T."/>
            <person name="Song B.L."/>
        </authorList>
    </citation>
    <scope>INTERACTION WITH LIMA1</scope>
</reference>
<sequence>MAAAWQGWLLWALLLNSAQGELYTPTHKAGFCTFYEECGKNPELSGGLTSLSNISCLSNTPARHVTGDHLALLQRVCPRLYNGPNDTYACCSTKQLVSLDSSLSITKALLTRCPACSENFVSIHCHNTCSPDQSLFINVTRVVQRDPGQLPAVVAYEAFYQRSFAEKAYESCSRVRIPAAASLAVGSMCGVYGSALCNAQRWLNFQGDTGNGLAPLDITFHLLEPGQALADGMKPLDGKITPCNESQGEDSAACSCQDCAASCPVIPPPPALRPSFYMGRMPGWLALIIIFTAVFVLLSVVLVYLRVASNRNKNKTAGSQEAPNLPRKRRFSPHTVLGRFFESWGTRVASWPLTVLALSFIVVIALSVGLTFIELTTDPVELWSAPKSQARKEKAFHDEHFGPFFRTNQIFVTAKNRSSYKYDSLLLGPKNFSGILSLDLLQELLELQERLRHLQVWSHEAQRNISLQDICYAPLNPHNTSLTDCCVNSLLQYFQNNHTLLLLTANQTLNGQTSLVDWKDHFLYCANAPLTYKDGTALALSCIADYGAPVFPFLAVGGYQGTDYSEAEALIITFSINNYPADDPRMAHAKLWEEAFLKEMQSFQRSTADKFQIAFSAERSLEDEINRTTIQDLPVFAISYLIVFLYISLALGSYSRWSRVAVDSKATLGLGGVAVVLGAVVAAMGFYSYLGVPSSLVIIQVVPFLVLAVGADNIFIFVLEYQRLPRMPGEQREAHIGRTLGSVAPSMLLCSLSEAICFFLGALTSMPAVRTFALTSGLAIIFDFLLQMTAFVALLSLDSKRQEASRPDVVCCFSSRNLPPPKQKEGLLLCFFRKIYTPFLLHRFIRPVVLLLFLVLFGANLYLMCNISVGLDQDLALPKDSYLIDYFLFLNRYLEVGPPVYFDTTSGYNFSTEAGMNAICSSAGCESFSLTQKIQYASEFPNQSYVAIAASSWVDDFIDWLTPSSSCCRIYTRGPHKDEFCPSTDTSFNCLKNCMNRTLGPVRPTTEQFHKYLPWFLNDTPNIRCPKGGLAAYRTSVNLSSDGQIIASQFMAYHKPLRNSQDFTEALRASRLLAANITAELRKVPGTDPNFEVFPYTISNVFYQQYLTVLPEGIFTLALCFVPTFVVCYLLLGLDIRSGILNLLSIIMILVDTIGLMAVWGISYNAVSLINLVTAVGMSVEFVSHITRSFAVSTKPTRLERAKDATIFMGSAVFAGVAMTNFPGILILGFAQAQLIQIFFFRLNLLITLLGLLHGLVFLPVVLSYLGPDVNQALVLEEKLATEAAMVSEPSCPQYPFPADANTSDYVNYGFNPEFIPEINAASSSLPKSDQKF</sequence>
<name>NPCL1_MOUSE</name>
<feature type="signal peptide" evidence="5">
    <location>
        <begin position="1"/>
        <end position="20"/>
    </location>
</feature>
<feature type="chain" id="PRO_0000023267" description="NPC1-like intracellular cholesterol transporter 1">
    <location>
        <begin position="21"/>
        <end position="1333"/>
    </location>
</feature>
<feature type="topological domain" description="Extracellular" evidence="5">
    <location>
        <begin position="21"/>
        <end position="284"/>
    </location>
</feature>
<feature type="transmembrane region" description="Helical; Name=1" evidence="5">
    <location>
        <begin position="285"/>
        <end position="305"/>
    </location>
</feature>
<feature type="topological domain" description="Cytoplasmic" evidence="5">
    <location>
        <begin position="306"/>
        <end position="352"/>
    </location>
</feature>
<feature type="transmembrane region" description="Helical; Name=2" evidence="5">
    <location>
        <begin position="353"/>
        <end position="373"/>
    </location>
</feature>
<feature type="topological domain" description="Extracellular" evidence="5">
    <location>
        <begin position="374"/>
        <end position="632"/>
    </location>
</feature>
<feature type="transmembrane region" description="Helical; Name=3" evidence="5">
    <location>
        <begin position="633"/>
        <end position="653"/>
    </location>
</feature>
<feature type="topological domain" description="Cytoplasmic" evidence="5">
    <location>
        <begin position="654"/>
        <end position="665"/>
    </location>
</feature>
<feature type="transmembrane region" description="Helical; Name=4" evidence="5">
    <location>
        <begin position="666"/>
        <end position="686"/>
    </location>
</feature>
<feature type="topological domain" description="Extracellular" evidence="5">
    <location>
        <begin position="687"/>
        <end position="696"/>
    </location>
</feature>
<feature type="transmembrane region" description="Helical; Name=5" evidence="5">
    <location>
        <begin position="697"/>
        <end position="717"/>
    </location>
</feature>
<feature type="topological domain" description="Cytoplasmic" evidence="5">
    <location>
        <begin position="718"/>
        <end position="742"/>
    </location>
</feature>
<feature type="transmembrane region" description="Helical; Name=6" evidence="5">
    <location>
        <begin position="743"/>
        <end position="763"/>
    </location>
</feature>
<feature type="topological domain" description="Extracellular" evidence="5">
    <location>
        <begin position="764"/>
        <end position="776"/>
    </location>
</feature>
<feature type="transmembrane region" description="Helical; Name=7" evidence="5">
    <location>
        <begin position="777"/>
        <end position="797"/>
    </location>
</feature>
<feature type="topological domain" description="Cytoplasmic" evidence="5">
    <location>
        <begin position="798"/>
        <end position="846"/>
    </location>
</feature>
<feature type="transmembrane region" description="Helical; Name=8" evidence="5">
    <location>
        <begin position="847"/>
        <end position="867"/>
    </location>
</feature>
<feature type="topological domain" description="Extracellular" evidence="5">
    <location>
        <begin position="868"/>
        <end position="1113"/>
    </location>
</feature>
<feature type="transmembrane region" description="Helical; Name=9" evidence="5">
    <location>
        <begin position="1114"/>
        <end position="1134"/>
    </location>
</feature>
<feature type="topological domain" description="Cytoplasmic" evidence="5">
    <location>
        <begin position="1135"/>
        <end position="1142"/>
    </location>
</feature>
<feature type="transmembrane region" description="Helical; Name=10" evidence="5">
    <location>
        <begin position="1143"/>
        <end position="1163"/>
    </location>
</feature>
<feature type="topological domain" description="Extracellular" evidence="5">
    <location>
        <begin position="1164"/>
        <end position="1165"/>
    </location>
</feature>
<feature type="transmembrane region" description="Helical; Name=11" evidence="5">
    <location>
        <begin position="1166"/>
        <end position="1186"/>
    </location>
</feature>
<feature type="topological domain" description="Cytoplasmic" evidence="5">
    <location>
        <begin position="1187"/>
        <end position="1206"/>
    </location>
</feature>
<feature type="transmembrane region" description="Helical; Name=12" evidence="5">
    <location>
        <begin position="1207"/>
        <end position="1227"/>
    </location>
</feature>
<feature type="topological domain" description="Extracellular" evidence="5">
    <location>
        <begin position="1228"/>
        <end position="1242"/>
    </location>
</feature>
<feature type="transmembrane region" description="Helical; Name=13" evidence="5">
    <location>
        <begin position="1243"/>
        <end position="1263"/>
    </location>
</feature>
<feature type="topological domain" description="Cytoplasmic" evidence="5">
    <location>
        <begin position="1264"/>
        <end position="1333"/>
    </location>
</feature>
<feature type="domain" description="SSD" evidence="6">
    <location>
        <begin position="632"/>
        <end position="797"/>
    </location>
</feature>
<feature type="disulfide bond" evidence="4">
    <location>
        <begin position="32"/>
        <end position="90"/>
    </location>
</feature>
<feature type="disulfide bond" evidence="4">
    <location>
        <begin position="38"/>
        <end position="56"/>
    </location>
</feature>
<feature type="disulfide bond" evidence="4">
    <location>
        <begin position="77"/>
        <end position="125"/>
    </location>
</feature>
<feature type="disulfide bond" evidence="4">
    <location>
        <begin position="91"/>
        <end position="129"/>
    </location>
</feature>
<feature type="disulfide bond" evidence="4">
    <location>
        <begin position="113"/>
        <end position="254"/>
    </location>
</feature>
<feature type="disulfide bond" evidence="4">
    <location>
        <begin position="116"/>
        <end position="172"/>
    </location>
</feature>
<feature type="disulfide bond" evidence="4">
    <location>
        <begin position="189"/>
        <end position="197"/>
    </location>
</feature>
<feature type="disulfide bond" evidence="4">
    <location>
        <begin position="243"/>
        <end position="259"/>
    </location>
</feature>
<feature type="disulfide bond" evidence="4">
    <location>
        <begin position="256"/>
        <end position="263"/>
    </location>
</feature>
<feature type="disulfide bond" evidence="2">
    <location>
        <begin position="471"/>
        <end position="485"/>
    </location>
</feature>
<feature type="disulfide bond" evidence="2">
    <location>
        <begin position="525"/>
        <end position="542"/>
    </location>
</feature>
<feature type="disulfide bond" evidence="2">
    <location>
        <begin position="920"/>
        <end position="925"/>
    </location>
</feature>
<feature type="disulfide bond" evidence="2">
    <location>
        <begin position="967"/>
        <end position="1025"/>
    </location>
</feature>
<feature type="disulfide bond" evidence="2">
    <location>
        <begin position="981"/>
        <end position="990"/>
    </location>
</feature>
<feature type="sequence conflict" description="In Ref. 2; CAI24395." evidence="14" ref="2">
    <original>N</original>
    <variation>K</variation>
    <location>
        <position position="476"/>
    </location>
</feature>
<keyword id="KW-1003">Cell membrane</keyword>
<keyword id="KW-0153">Cholesterol metabolism</keyword>
<keyword id="KW-1015">Disulfide bond</keyword>
<keyword id="KW-0325">Glycoprotein</keyword>
<keyword id="KW-0443">Lipid metabolism</keyword>
<keyword id="KW-0472">Membrane</keyword>
<keyword id="KW-1185">Reference proteome</keyword>
<keyword id="KW-0732">Signal</keyword>
<keyword id="KW-0753">Steroid metabolism</keyword>
<keyword id="KW-1207">Sterol metabolism</keyword>
<keyword id="KW-0812">Transmembrane</keyword>
<keyword id="KW-1133">Transmembrane helix</keyword>
<keyword id="KW-0813">Transport</keyword>
<accession>Q6T3U4</accession>
<accession>Q5SVX1</accession>
<organism>
    <name type="scientific">Mus musculus</name>
    <name type="common">Mouse</name>
    <dbReference type="NCBI Taxonomy" id="10090"/>
    <lineage>
        <taxon>Eukaryota</taxon>
        <taxon>Metazoa</taxon>
        <taxon>Chordata</taxon>
        <taxon>Craniata</taxon>
        <taxon>Vertebrata</taxon>
        <taxon>Euteleostomi</taxon>
        <taxon>Mammalia</taxon>
        <taxon>Eutheria</taxon>
        <taxon>Euarchontoglires</taxon>
        <taxon>Glires</taxon>
        <taxon>Rodentia</taxon>
        <taxon>Myomorpha</taxon>
        <taxon>Muroidea</taxon>
        <taxon>Muridae</taxon>
        <taxon>Murinae</taxon>
        <taxon>Mus</taxon>
        <taxon>Mus</taxon>
    </lineage>
</organism>
<evidence type="ECO:0000250" key="1"/>
<evidence type="ECO:0000250" key="2">
    <source>
        <dbReference type="UniProtKB" id="O15118"/>
    </source>
</evidence>
<evidence type="ECO:0000250" key="3">
    <source>
        <dbReference type="UniProtKB" id="Q6T3U3"/>
    </source>
</evidence>
<evidence type="ECO:0000250" key="4">
    <source>
        <dbReference type="UniProtKB" id="Q9UHC9"/>
    </source>
</evidence>
<evidence type="ECO:0000255" key="5"/>
<evidence type="ECO:0000255" key="6">
    <source>
        <dbReference type="PROSITE-ProRule" id="PRU00199"/>
    </source>
</evidence>
<evidence type="ECO:0000269" key="7">
    <source>
    </source>
</evidence>
<evidence type="ECO:0000269" key="8">
    <source>
    </source>
</evidence>
<evidence type="ECO:0000269" key="9">
    <source>
    </source>
</evidence>
<evidence type="ECO:0000269" key="10">
    <source>
    </source>
</evidence>
<evidence type="ECO:0000269" key="11">
    <source>
    </source>
</evidence>
<evidence type="ECO:0000303" key="12">
    <source>
    </source>
</evidence>
<evidence type="ECO:0000303" key="13">
    <source>
    </source>
</evidence>
<evidence type="ECO:0000305" key="14"/>
<evidence type="ECO:0000305" key="15">
    <source>
    </source>
</evidence>
<evidence type="ECO:0000305" key="16">
    <source>
    </source>
</evidence>
<evidence type="ECO:0000312" key="17">
    <source>
        <dbReference type="MGI" id="MGI:2685089"/>
    </source>
</evidence>
<comment type="function">
    <text evidence="4 7 8 10">Plays a major role in cholesterol homeostasis (PubMed:14976318, PubMed:15173162, PubMed:15671032). Critical for the uptake of cholesterol across the plasma membrane of the intestinal enterocyte (PubMed:15173162, PubMed:15671032). Involved in plant sterol absorption, it transports sitosterol, although at lower rates than cholesterol (PubMed:15173162). May have a function in the transport of multiple lipids and their homeostasis, thereby influencing lipid metabolism regulation (PubMed:15671032). May be involved in caveolin trafficking from the plasma membrane (PubMed:15671032). Acts as a negative regulator of NPC2 and down-regulates its expression and secretion by inhibiting its maturation and accelerating its degradation (By similarity).</text>
</comment>
<comment type="catalytic activity">
    <reaction evidence="15 16">
        <text>cholesterol(in) = cholesterol(out)</text>
        <dbReference type="Rhea" id="RHEA:39747"/>
        <dbReference type="ChEBI" id="CHEBI:16113"/>
    </reaction>
</comment>
<comment type="catalytic activity">
    <reaction evidence="15">
        <text>sitosterol(out) = sitosterol(in)</text>
        <dbReference type="Rhea" id="RHEA:70723"/>
        <dbReference type="ChEBI" id="CHEBI:27693"/>
    </reaction>
</comment>
<comment type="subunit">
    <text evidence="1 11">Interacts with RAB11A, MYO5B and RAB11FIP2. Interaction with RAB11A, MYO5B and RAB11FIP2 is required for proper transport to the plasma membrane upon cholesterol depletion (By similarity). Interacts with NPC2 (By similarity). Interacts with LIMA1 (PubMed:29880681).</text>
</comment>
<comment type="subcellular location">
    <subcellularLocation>
        <location>Apical cell membrane</location>
        <topology>Multi-pass membrane protein</topology>
    </subcellularLocation>
    <subcellularLocation>
        <location evidence="3">Cell membrane</location>
        <topology>Multi-pass membrane protein</topology>
    </subcellularLocation>
    <text>Subfractionation of brush border membranes from proximal enterocytes suggests considerable association with the apical membrane fraction. Exists as a predominantly cell surface membrane expressed protein.</text>
</comment>
<comment type="tissue specificity">
    <text evidence="7 10">Expressed in small intestine, stomach and muscle, along with detectable expression in lung, heart, gall bladder, brain, testis, skin and liver. Expression in liver is extremely low.</text>
</comment>
<comment type="induction">
    <text evidence="8 9">Cholesterol/cholate feeding resulted in down-regulation of intestinal expression. Expression is decreased by 35% in the jejunum upon PPARD activation.</text>
</comment>
<comment type="PTM">
    <text evidence="1">Highly glycosylated.</text>
</comment>
<comment type="disruption phenotype">
    <text evidence="10">Mice have multiple lipid transport defects and have a protective effect against diet-induced hyperlipidemia. They have also a deregulation of CAV1 transport and localization, suggesting that the observed lipid transport defect may be the indirect result of an inability of cells to properly target and/or regulate CAV1 expression.</text>
</comment>
<comment type="similarity">
    <text evidence="14">Belongs to the patched family.</text>
</comment>
<dbReference type="EMBL" id="AY437866">
    <property type="protein sequence ID" value="AAR97887.1"/>
    <property type="molecule type" value="mRNA"/>
</dbReference>
<dbReference type="EMBL" id="AL607152">
    <property type="protein sequence ID" value="CAI24395.1"/>
    <property type="molecule type" value="Genomic_DNA"/>
</dbReference>
<dbReference type="CCDS" id="CCDS24413.1"/>
<dbReference type="SMR" id="Q6T3U4"/>
<dbReference type="FunCoup" id="Q6T3U4">
    <property type="interactions" value="62"/>
</dbReference>
<dbReference type="STRING" id="10090.ENSMUSP00000004505"/>
<dbReference type="BindingDB" id="Q6T3U4"/>
<dbReference type="ChEMBL" id="CHEMBL1075296"/>
<dbReference type="GlyGen" id="Q6T3U4">
    <property type="glycosylation" value="2 sites, 2 N-linked glycans (2 sites)"/>
</dbReference>
<dbReference type="iPTMnet" id="Q6T3U4"/>
<dbReference type="PhosphoSitePlus" id="Q6T3U4"/>
<dbReference type="jPOST" id="Q6T3U4"/>
<dbReference type="PaxDb" id="10090-ENSMUSP00000004505"/>
<dbReference type="ProteomicsDB" id="293948"/>
<dbReference type="AGR" id="MGI:2685089"/>
<dbReference type="MGI" id="MGI:2685089">
    <property type="gene designation" value="Npc1l1"/>
</dbReference>
<dbReference type="eggNOG" id="KOG1933">
    <property type="taxonomic scope" value="Eukaryota"/>
</dbReference>
<dbReference type="InParanoid" id="Q6T3U4"/>
<dbReference type="PhylomeDB" id="Q6T3U4"/>
<dbReference type="TreeFam" id="TF300416"/>
<dbReference type="Reactome" id="R-MMU-8963678">
    <property type="pathway name" value="Intestinal lipid absorption"/>
</dbReference>
<dbReference type="ChiTaRS" id="Npc1l1">
    <property type="organism name" value="mouse"/>
</dbReference>
<dbReference type="PRO" id="PR:Q6T3U4"/>
<dbReference type="Proteomes" id="UP000000589">
    <property type="component" value="Unplaced"/>
</dbReference>
<dbReference type="RNAct" id="Q6T3U4">
    <property type="molecule type" value="protein"/>
</dbReference>
<dbReference type="GO" id="GO:0016324">
    <property type="term" value="C:apical plasma membrane"/>
    <property type="evidence" value="ECO:0007669"/>
    <property type="project" value="UniProtKB-SubCell"/>
</dbReference>
<dbReference type="GO" id="GO:0005319">
    <property type="term" value="F:lipid transporter activity"/>
    <property type="evidence" value="ECO:0007669"/>
    <property type="project" value="InterPro"/>
</dbReference>
<dbReference type="GO" id="GO:0042803">
    <property type="term" value="F:protein homodimerization activity"/>
    <property type="evidence" value="ECO:0000250"/>
    <property type="project" value="UniProtKB"/>
</dbReference>
<dbReference type="GO" id="GO:0042632">
    <property type="term" value="P:cholesterol homeostasis"/>
    <property type="evidence" value="ECO:0000315"/>
    <property type="project" value="MGI"/>
</dbReference>
<dbReference type="GO" id="GO:0008203">
    <property type="term" value="P:cholesterol metabolic process"/>
    <property type="evidence" value="ECO:0007669"/>
    <property type="project" value="UniProtKB-KW"/>
</dbReference>
<dbReference type="GO" id="GO:0030301">
    <property type="term" value="P:cholesterol transport"/>
    <property type="evidence" value="ECO:0000315"/>
    <property type="project" value="UniProtKB"/>
</dbReference>
<dbReference type="GO" id="GO:0030299">
    <property type="term" value="P:intestinal cholesterol absorption"/>
    <property type="evidence" value="ECO:0000315"/>
    <property type="project" value="UniProtKB"/>
</dbReference>
<dbReference type="FunFam" id="1.20.1640.10:FF:000008">
    <property type="entry name" value="NPC intracellular cholesterol transporter 1"/>
    <property type="match status" value="1"/>
</dbReference>
<dbReference type="FunFam" id="1.20.1640.10:FF:000010">
    <property type="entry name" value="NPC intracellular cholesterol transporter 1"/>
    <property type="match status" value="1"/>
</dbReference>
<dbReference type="Gene3D" id="1.20.1640.10">
    <property type="entry name" value="Multidrug efflux transporter AcrB transmembrane domain"/>
    <property type="match status" value="2"/>
</dbReference>
<dbReference type="InterPro" id="IPR053958">
    <property type="entry name" value="HMGCR/SNAP/NPC1-like_SSD"/>
</dbReference>
<dbReference type="InterPro" id="IPR004765">
    <property type="entry name" value="NPC1-like"/>
</dbReference>
<dbReference type="InterPro" id="IPR053956">
    <property type="entry name" value="NPC1_MLD"/>
</dbReference>
<dbReference type="InterPro" id="IPR032190">
    <property type="entry name" value="NPC1_N"/>
</dbReference>
<dbReference type="InterPro" id="IPR000731">
    <property type="entry name" value="SSD"/>
</dbReference>
<dbReference type="NCBIfam" id="TIGR00917">
    <property type="entry name" value="2A060601"/>
    <property type="match status" value="1"/>
</dbReference>
<dbReference type="PANTHER" id="PTHR45727">
    <property type="entry name" value="NPC INTRACELLULAR CHOLESTEROL TRANSPORTER 1"/>
    <property type="match status" value="1"/>
</dbReference>
<dbReference type="PANTHER" id="PTHR45727:SF3">
    <property type="entry name" value="NPC1-LIKE INTRACELLULAR CHOLESTEROL TRANSPORTER 1"/>
    <property type="match status" value="1"/>
</dbReference>
<dbReference type="Pfam" id="PF22314">
    <property type="entry name" value="NPC1_MLD"/>
    <property type="match status" value="1"/>
</dbReference>
<dbReference type="Pfam" id="PF16414">
    <property type="entry name" value="NPC1_N"/>
    <property type="match status" value="1"/>
</dbReference>
<dbReference type="Pfam" id="PF12349">
    <property type="entry name" value="Sterol-sensing"/>
    <property type="match status" value="1"/>
</dbReference>
<dbReference type="SUPFAM" id="SSF82866">
    <property type="entry name" value="Multidrug efflux transporter AcrB transmembrane domain"/>
    <property type="match status" value="2"/>
</dbReference>
<dbReference type="PROSITE" id="PS50156">
    <property type="entry name" value="SSD"/>
    <property type="match status" value="1"/>
</dbReference>